<comment type="function">
    <text evidence="1">RNA-binding component of the eukaryotic translation initiation factor 3 (eIF-3) complex, which is involved in protein synthesis of a specialized repertoire of mRNAs and, together with other initiation factors, stimulates binding of mRNA and methionyl-tRNAi to the 40S ribosome. The eIF-3 complex specifically targets and initiates translation of a subset of mRNAs involved in cell proliferation.</text>
</comment>
<comment type="subunit">
    <text evidence="1">Component of the eukaryotic translation initiation factor 3 (eIF-3) complex.</text>
</comment>
<comment type="subcellular location">
    <subcellularLocation>
        <location evidence="1">Cytoplasm</location>
    </subcellularLocation>
</comment>
<comment type="similarity">
    <text evidence="1">Belongs to the eIF-3 subunit B family.</text>
</comment>
<keyword id="KW-0963">Cytoplasm</keyword>
<keyword id="KW-0396">Initiation factor</keyword>
<keyword id="KW-0648">Protein biosynthesis</keyword>
<keyword id="KW-1185">Reference proteome</keyword>
<keyword id="KW-0677">Repeat</keyword>
<keyword id="KW-0694">RNA-binding</keyword>
<keyword id="KW-0853">WD repeat</keyword>
<accession>Q0CN46</accession>
<organism>
    <name type="scientific">Aspergillus terreus (strain NIH 2624 / FGSC A1156)</name>
    <dbReference type="NCBI Taxonomy" id="341663"/>
    <lineage>
        <taxon>Eukaryota</taxon>
        <taxon>Fungi</taxon>
        <taxon>Dikarya</taxon>
        <taxon>Ascomycota</taxon>
        <taxon>Pezizomycotina</taxon>
        <taxon>Eurotiomycetes</taxon>
        <taxon>Eurotiomycetidae</taxon>
        <taxon>Eurotiales</taxon>
        <taxon>Aspergillaceae</taxon>
        <taxon>Aspergillus</taxon>
        <taxon>Aspergillus subgen. Circumdati</taxon>
    </lineage>
</organism>
<proteinExistence type="inferred from homology"/>
<sequence length="742" mass="84189">MAPSFDTLSEQDLHEEEEEEIDFSDLKAQYEVKLDEGLDTFVVIDGLPIVPEESRQKLIKFLLRKLSAAGKTSEDAVFMPLNEKNMSEGFAFVEYETPEQAVAAVKQLHGTPLDKKHTLAVNKLMDIDRYGREGRIDEEYKPPTIEPFKEKEHLRSWLADPNARDQFALYRGDKVGVFWNNKNNPPENVVDRAHWTQLFVQWSPKGTYLASVHPQGIQLWGGPAFSKLKQFPHPFVSLVEFSPAENYVTTWSARPIQVEEGGSGPLSYEEDGKNIIIWDIVTGKPLRSFVSHDLAAGPAEAEAQPKKKVQWPAFKWSADEKYVARMLQGQSISIYEAPRMNLLGKTSVKIDGVMDFEWSPATVNRDGVKQYEQLLCFWTPEIGSNPARVGMMSVPSKEIVRTRNLFNVSDVKLHWQSQGTYVCVKVDRHSKSKKSMATNLEIFRVREKGVPVEVVDSLKDTVINFAWEPNGGRFVLITTGETPTGAAVPPKTAVSFFAPEKKGGSAGNFKLVRTIEKKTSNAIYWSPKGRFVVVATVHSQSSFDLDFWDMDFEGEKPEGEKDLAANLQLMKTVEHYGVTDVDWDPTGRYVVSSASVWTHSMENGWNLHTFAGQTLSENPTDKFKQFIWRPRPPTLLSKEEQKQVRKNLREYSKEFDEEDKYAVDIANTAVVEKRKRVLSEWLAWIRREKELLAEDKDAYGLPENVDDAKMAKDAPQVSEDQGETVVEEIVEEIIEENEEVIG</sequence>
<name>EIF3B_ASPTN</name>
<dbReference type="EMBL" id="CH476599">
    <property type="protein sequence ID" value="EAU35335.1"/>
    <property type="molecule type" value="Genomic_DNA"/>
</dbReference>
<dbReference type="RefSeq" id="XP_001214066.1">
    <property type="nucleotide sequence ID" value="XM_001214066.1"/>
</dbReference>
<dbReference type="SMR" id="Q0CN46"/>
<dbReference type="STRING" id="341663.Q0CN46"/>
<dbReference type="EnsemblFungi" id="EAU35335">
    <property type="protein sequence ID" value="EAU35335"/>
    <property type="gene ID" value="ATEG_04888"/>
</dbReference>
<dbReference type="GeneID" id="4320016"/>
<dbReference type="VEuPathDB" id="FungiDB:ATEG_04888"/>
<dbReference type="eggNOG" id="KOG2314">
    <property type="taxonomic scope" value="Eukaryota"/>
</dbReference>
<dbReference type="HOGENOM" id="CLU_011152_4_0_1"/>
<dbReference type="OMA" id="LWGGPQF"/>
<dbReference type="OrthoDB" id="10250414at2759"/>
<dbReference type="Proteomes" id="UP000007963">
    <property type="component" value="Unassembled WGS sequence"/>
</dbReference>
<dbReference type="GO" id="GO:0010494">
    <property type="term" value="C:cytoplasmic stress granule"/>
    <property type="evidence" value="ECO:0007669"/>
    <property type="project" value="EnsemblFungi"/>
</dbReference>
<dbReference type="GO" id="GO:0016282">
    <property type="term" value="C:eukaryotic 43S preinitiation complex"/>
    <property type="evidence" value="ECO:0007669"/>
    <property type="project" value="UniProtKB-UniRule"/>
</dbReference>
<dbReference type="GO" id="GO:0033290">
    <property type="term" value="C:eukaryotic 48S preinitiation complex"/>
    <property type="evidence" value="ECO:0007669"/>
    <property type="project" value="UniProtKB-UniRule"/>
</dbReference>
<dbReference type="GO" id="GO:0071540">
    <property type="term" value="C:eukaryotic translation initiation factor 3 complex, eIF3e"/>
    <property type="evidence" value="ECO:0007669"/>
    <property type="project" value="EnsemblFungi"/>
</dbReference>
<dbReference type="GO" id="GO:0071541">
    <property type="term" value="C:eukaryotic translation initiation factor 3 complex, eIF3m"/>
    <property type="evidence" value="ECO:0007669"/>
    <property type="project" value="EnsemblFungi"/>
</dbReference>
<dbReference type="GO" id="GO:0043614">
    <property type="term" value="C:multi-eIF complex"/>
    <property type="evidence" value="ECO:0007669"/>
    <property type="project" value="EnsemblFungi"/>
</dbReference>
<dbReference type="GO" id="GO:0042802">
    <property type="term" value="F:identical protein binding"/>
    <property type="evidence" value="ECO:0007669"/>
    <property type="project" value="EnsemblFungi"/>
</dbReference>
<dbReference type="GO" id="GO:0003723">
    <property type="term" value="F:RNA binding"/>
    <property type="evidence" value="ECO:0007669"/>
    <property type="project" value="UniProtKB-UniRule"/>
</dbReference>
<dbReference type="GO" id="GO:0003743">
    <property type="term" value="F:translation initiation factor activity"/>
    <property type="evidence" value="ECO:0007669"/>
    <property type="project" value="UniProtKB-UniRule"/>
</dbReference>
<dbReference type="GO" id="GO:0031369">
    <property type="term" value="F:translation initiation factor binding"/>
    <property type="evidence" value="ECO:0007669"/>
    <property type="project" value="InterPro"/>
</dbReference>
<dbReference type="GO" id="GO:0001732">
    <property type="term" value="P:formation of cytoplasmic translation initiation complex"/>
    <property type="evidence" value="ECO:0007669"/>
    <property type="project" value="UniProtKB-UniRule"/>
</dbReference>
<dbReference type="CDD" id="cd12278">
    <property type="entry name" value="RRM_eIF3B"/>
    <property type="match status" value="1"/>
</dbReference>
<dbReference type="FunFam" id="2.130.10.10:FF:000419">
    <property type="entry name" value="Eukaryotic translation initiation factor 3 subunit B"/>
    <property type="match status" value="1"/>
</dbReference>
<dbReference type="FunFam" id="3.30.70.330:FF:000235">
    <property type="entry name" value="Eukaryotic translation initiation factor 3 subunit B"/>
    <property type="match status" value="1"/>
</dbReference>
<dbReference type="Gene3D" id="3.30.70.330">
    <property type="match status" value="1"/>
</dbReference>
<dbReference type="Gene3D" id="2.130.10.10">
    <property type="entry name" value="YVTN repeat-like/Quinoprotein amine dehydrogenase"/>
    <property type="match status" value="2"/>
</dbReference>
<dbReference type="HAMAP" id="MF_03001">
    <property type="entry name" value="eIF3b"/>
    <property type="match status" value="1"/>
</dbReference>
<dbReference type="InterPro" id="IPR011400">
    <property type="entry name" value="EIF3B"/>
</dbReference>
<dbReference type="InterPro" id="IPR034363">
    <property type="entry name" value="eIF3B_RRM"/>
</dbReference>
<dbReference type="InterPro" id="IPR012677">
    <property type="entry name" value="Nucleotide-bd_a/b_plait_sf"/>
</dbReference>
<dbReference type="InterPro" id="IPR035979">
    <property type="entry name" value="RBD_domain_sf"/>
</dbReference>
<dbReference type="InterPro" id="IPR000504">
    <property type="entry name" value="RRM_dom"/>
</dbReference>
<dbReference type="InterPro" id="IPR013979">
    <property type="entry name" value="TIF_beta_prop-like"/>
</dbReference>
<dbReference type="InterPro" id="IPR015943">
    <property type="entry name" value="WD40/YVTN_repeat-like_dom_sf"/>
</dbReference>
<dbReference type="PANTHER" id="PTHR14068">
    <property type="entry name" value="EUKARYOTIC TRANSLATION INITIATION FACTOR 3 EIF3 -RELATED"/>
    <property type="match status" value="1"/>
</dbReference>
<dbReference type="PANTHER" id="PTHR14068:SF0">
    <property type="entry name" value="EUKARYOTIC TRANSLATION INITIATION FACTOR 3 SUBUNIT B"/>
    <property type="match status" value="1"/>
</dbReference>
<dbReference type="Pfam" id="PF08662">
    <property type="entry name" value="eIF2A"/>
    <property type="match status" value="1"/>
</dbReference>
<dbReference type="Pfam" id="PF00076">
    <property type="entry name" value="RRM_1"/>
    <property type="match status" value="1"/>
</dbReference>
<dbReference type="PIRSF" id="PIRSF036424">
    <property type="entry name" value="eIF3b"/>
    <property type="match status" value="1"/>
</dbReference>
<dbReference type="SMART" id="SM00360">
    <property type="entry name" value="RRM"/>
    <property type="match status" value="1"/>
</dbReference>
<dbReference type="SUPFAM" id="SSF54928">
    <property type="entry name" value="RNA-binding domain, RBD"/>
    <property type="match status" value="1"/>
</dbReference>
<dbReference type="SUPFAM" id="SSF69322">
    <property type="entry name" value="Tricorn protease domain 2"/>
    <property type="match status" value="1"/>
</dbReference>
<dbReference type="PROSITE" id="PS50102">
    <property type="entry name" value="RRM"/>
    <property type="match status" value="1"/>
</dbReference>
<evidence type="ECO:0000255" key="1">
    <source>
        <dbReference type="HAMAP-Rule" id="MF_03001"/>
    </source>
</evidence>
<evidence type="ECO:0000256" key="2">
    <source>
        <dbReference type="SAM" id="MobiDB-lite"/>
    </source>
</evidence>
<reference key="1">
    <citation type="submission" date="2005-09" db="EMBL/GenBank/DDBJ databases">
        <title>Annotation of the Aspergillus terreus NIH2624 genome.</title>
        <authorList>
            <person name="Birren B.W."/>
            <person name="Lander E.S."/>
            <person name="Galagan J.E."/>
            <person name="Nusbaum C."/>
            <person name="Devon K."/>
            <person name="Henn M."/>
            <person name="Ma L.-J."/>
            <person name="Jaffe D.B."/>
            <person name="Butler J."/>
            <person name="Alvarez P."/>
            <person name="Gnerre S."/>
            <person name="Grabherr M."/>
            <person name="Kleber M."/>
            <person name="Mauceli E.W."/>
            <person name="Brockman W."/>
            <person name="Rounsley S."/>
            <person name="Young S.K."/>
            <person name="LaButti K."/>
            <person name="Pushparaj V."/>
            <person name="DeCaprio D."/>
            <person name="Crawford M."/>
            <person name="Koehrsen M."/>
            <person name="Engels R."/>
            <person name="Montgomery P."/>
            <person name="Pearson M."/>
            <person name="Howarth C."/>
            <person name="Larson L."/>
            <person name="Luoma S."/>
            <person name="White J."/>
            <person name="Alvarado L."/>
            <person name="Kodira C.D."/>
            <person name="Zeng Q."/>
            <person name="Oleary S."/>
            <person name="Yandava C."/>
            <person name="Denning D.W."/>
            <person name="Nierman W.C."/>
            <person name="Milne T."/>
            <person name="Madden K."/>
        </authorList>
    </citation>
    <scope>NUCLEOTIDE SEQUENCE [LARGE SCALE GENOMIC DNA]</scope>
    <source>
        <strain>NIH 2624 / FGSC A1156</strain>
    </source>
</reference>
<protein>
    <recommendedName>
        <fullName evidence="1">Eukaryotic translation initiation factor 3 subunit B</fullName>
        <shortName evidence="1">eIF3b</shortName>
    </recommendedName>
    <alternativeName>
        <fullName evidence="1">Eukaryotic translation initiation factor 3 90 kDa subunit homolog</fullName>
        <shortName evidence="1">eIF3 p90</shortName>
    </alternativeName>
    <alternativeName>
        <fullName>Translation initiation factor eIF3 p90 subunit homolog</fullName>
    </alternativeName>
</protein>
<feature type="chain" id="PRO_0000363812" description="Eukaryotic translation initiation factor 3 subunit B">
    <location>
        <begin position="1"/>
        <end position="742"/>
    </location>
</feature>
<feature type="domain" description="RRM" evidence="1">
    <location>
        <begin position="40"/>
        <end position="126"/>
    </location>
</feature>
<feature type="repeat" description="WD 1">
    <location>
        <begin position="193"/>
        <end position="230"/>
    </location>
</feature>
<feature type="repeat" description="WD 2">
    <location>
        <begin position="232"/>
        <end position="290"/>
    </location>
</feature>
<feature type="repeat" description="WD 3">
    <location>
        <begin position="304"/>
        <end position="345"/>
    </location>
</feature>
<feature type="repeat" description="WD 4">
    <location>
        <begin position="515"/>
        <end position="558"/>
    </location>
</feature>
<feature type="repeat" description="WD 5">
    <location>
        <begin position="573"/>
        <end position="611"/>
    </location>
</feature>
<feature type="region of interest" description="Disordered" evidence="2">
    <location>
        <begin position="1"/>
        <end position="20"/>
    </location>
</feature>
<feature type="compositionally biased region" description="Polar residues" evidence="2">
    <location>
        <begin position="1"/>
        <end position="10"/>
    </location>
</feature>
<gene>
    <name type="primary">prt1</name>
    <name type="ORF">ATEG_04888</name>
</gene>